<comment type="function">
    <text evidence="1">RNaseP catalyzes the removal of the 5'-leader sequence from pre-tRNA to produce the mature 5'-terminus. It can also cleave other RNA substrates such as 4.5S RNA. The protein component plays an auxiliary but essential role in vivo by binding to the 5'-leader sequence and broadening the substrate specificity of the ribozyme.</text>
</comment>
<comment type="catalytic activity">
    <reaction evidence="1">
        <text>Endonucleolytic cleavage of RNA, removing 5'-extranucleotides from tRNA precursor.</text>
        <dbReference type="EC" id="3.1.26.5"/>
    </reaction>
</comment>
<comment type="subunit">
    <text evidence="1">Consists of a catalytic RNA component (M1 or rnpB) and a protein subunit.</text>
</comment>
<comment type="similarity">
    <text evidence="1">Belongs to the RnpA family.</text>
</comment>
<gene>
    <name evidence="1" type="primary">rnpA</name>
    <name type="ordered locus">LL0128</name>
    <name type="ORF">L131443</name>
</gene>
<name>RNPA_LACLA</name>
<evidence type="ECO:0000255" key="1">
    <source>
        <dbReference type="HAMAP-Rule" id="MF_00227"/>
    </source>
</evidence>
<reference key="1">
    <citation type="journal article" date="2001" name="Genome Res.">
        <title>The complete genome sequence of the lactic acid bacterium Lactococcus lactis ssp. lactis IL1403.</title>
        <authorList>
            <person name="Bolotin A."/>
            <person name="Wincker P."/>
            <person name="Mauger S."/>
            <person name="Jaillon O."/>
            <person name="Malarme K."/>
            <person name="Weissenbach J."/>
            <person name="Ehrlich S.D."/>
            <person name="Sorokin A."/>
        </authorList>
    </citation>
    <scope>NUCLEOTIDE SEQUENCE [LARGE SCALE GENOMIC DNA]</scope>
    <source>
        <strain>IL1403</strain>
    </source>
</reference>
<sequence>MAIKKTYRVKRSKDFDQIFSAKHSFANKKFVVYKLNTNQPHFRVGLSVSKKLGHAVLRNRIKRLLRHAIAEFKPYLTDEDFVIIARSGVETLSFEEVKKNLKHVLKLSKIYVDGEND</sequence>
<protein>
    <recommendedName>
        <fullName evidence="1">Ribonuclease P protein component</fullName>
        <shortName evidence="1">RNase P protein</shortName>
        <shortName evidence="1">RNaseP protein</shortName>
        <ecNumber evidence="1">3.1.26.5</ecNumber>
    </recommendedName>
    <alternativeName>
        <fullName evidence="1">Protein C5</fullName>
    </alternativeName>
</protein>
<feature type="chain" id="PRO_0000198474" description="Ribonuclease P protein component">
    <location>
        <begin position="1"/>
        <end position="117"/>
    </location>
</feature>
<proteinExistence type="inferred from homology"/>
<dbReference type="EC" id="3.1.26.5" evidence="1"/>
<dbReference type="EMBL" id="AE005176">
    <property type="protein sequence ID" value="AAK04226.1"/>
    <property type="molecule type" value="Genomic_DNA"/>
</dbReference>
<dbReference type="PIR" id="H86640">
    <property type="entry name" value="H86640"/>
</dbReference>
<dbReference type="RefSeq" id="NP_266284.1">
    <property type="nucleotide sequence ID" value="NC_002662.1"/>
</dbReference>
<dbReference type="SMR" id="Q9CJ73"/>
<dbReference type="PaxDb" id="272623-L131443"/>
<dbReference type="EnsemblBacteria" id="AAK04226">
    <property type="protein sequence ID" value="AAK04226"/>
    <property type="gene ID" value="L131443"/>
</dbReference>
<dbReference type="KEGG" id="lla:L131443"/>
<dbReference type="PATRIC" id="fig|272623.7.peg.141"/>
<dbReference type="eggNOG" id="COG0594">
    <property type="taxonomic scope" value="Bacteria"/>
</dbReference>
<dbReference type="HOGENOM" id="CLU_117179_9_1_9"/>
<dbReference type="OrthoDB" id="9810867at2"/>
<dbReference type="Proteomes" id="UP000002196">
    <property type="component" value="Chromosome"/>
</dbReference>
<dbReference type="GO" id="GO:0030677">
    <property type="term" value="C:ribonuclease P complex"/>
    <property type="evidence" value="ECO:0007669"/>
    <property type="project" value="TreeGrafter"/>
</dbReference>
<dbReference type="GO" id="GO:0042781">
    <property type="term" value="F:3'-tRNA processing endoribonuclease activity"/>
    <property type="evidence" value="ECO:0007669"/>
    <property type="project" value="TreeGrafter"/>
</dbReference>
<dbReference type="GO" id="GO:0004526">
    <property type="term" value="F:ribonuclease P activity"/>
    <property type="evidence" value="ECO:0007669"/>
    <property type="project" value="UniProtKB-UniRule"/>
</dbReference>
<dbReference type="GO" id="GO:0000049">
    <property type="term" value="F:tRNA binding"/>
    <property type="evidence" value="ECO:0007669"/>
    <property type="project" value="UniProtKB-UniRule"/>
</dbReference>
<dbReference type="GO" id="GO:0001682">
    <property type="term" value="P:tRNA 5'-leader removal"/>
    <property type="evidence" value="ECO:0007669"/>
    <property type="project" value="UniProtKB-UniRule"/>
</dbReference>
<dbReference type="FunFam" id="3.30.230.10:FF:000021">
    <property type="entry name" value="Ribonuclease P protein component"/>
    <property type="match status" value="1"/>
</dbReference>
<dbReference type="Gene3D" id="3.30.230.10">
    <property type="match status" value="1"/>
</dbReference>
<dbReference type="HAMAP" id="MF_00227">
    <property type="entry name" value="RNase_P"/>
    <property type="match status" value="1"/>
</dbReference>
<dbReference type="InterPro" id="IPR020568">
    <property type="entry name" value="Ribosomal_Su5_D2-typ_SF"/>
</dbReference>
<dbReference type="InterPro" id="IPR014721">
    <property type="entry name" value="Ribsml_uS5_D2-typ_fold_subgr"/>
</dbReference>
<dbReference type="InterPro" id="IPR000100">
    <property type="entry name" value="RNase_P"/>
</dbReference>
<dbReference type="InterPro" id="IPR020539">
    <property type="entry name" value="RNase_P_CS"/>
</dbReference>
<dbReference type="NCBIfam" id="TIGR00188">
    <property type="entry name" value="rnpA"/>
    <property type="match status" value="1"/>
</dbReference>
<dbReference type="PANTHER" id="PTHR33992">
    <property type="entry name" value="RIBONUCLEASE P PROTEIN COMPONENT"/>
    <property type="match status" value="1"/>
</dbReference>
<dbReference type="PANTHER" id="PTHR33992:SF1">
    <property type="entry name" value="RIBONUCLEASE P PROTEIN COMPONENT"/>
    <property type="match status" value="1"/>
</dbReference>
<dbReference type="Pfam" id="PF00825">
    <property type="entry name" value="Ribonuclease_P"/>
    <property type="match status" value="1"/>
</dbReference>
<dbReference type="SUPFAM" id="SSF54211">
    <property type="entry name" value="Ribosomal protein S5 domain 2-like"/>
    <property type="match status" value="1"/>
</dbReference>
<dbReference type="PROSITE" id="PS00648">
    <property type="entry name" value="RIBONUCLEASE_P"/>
    <property type="match status" value="1"/>
</dbReference>
<organism>
    <name type="scientific">Lactococcus lactis subsp. lactis (strain IL1403)</name>
    <name type="common">Streptococcus lactis</name>
    <dbReference type="NCBI Taxonomy" id="272623"/>
    <lineage>
        <taxon>Bacteria</taxon>
        <taxon>Bacillati</taxon>
        <taxon>Bacillota</taxon>
        <taxon>Bacilli</taxon>
        <taxon>Lactobacillales</taxon>
        <taxon>Streptococcaceae</taxon>
        <taxon>Lactococcus</taxon>
    </lineage>
</organism>
<keyword id="KW-0255">Endonuclease</keyword>
<keyword id="KW-0378">Hydrolase</keyword>
<keyword id="KW-0540">Nuclease</keyword>
<keyword id="KW-1185">Reference proteome</keyword>
<keyword id="KW-0694">RNA-binding</keyword>
<keyword id="KW-0819">tRNA processing</keyword>
<accession>Q9CJ73</accession>